<reference key="1">
    <citation type="journal article" date="2003" name="Nat. Genet.">
        <title>Comparative analysis of the genome sequences of Bordetella pertussis, Bordetella parapertussis and Bordetella bronchiseptica.</title>
        <authorList>
            <person name="Parkhill J."/>
            <person name="Sebaihia M."/>
            <person name="Preston A."/>
            <person name="Murphy L.D."/>
            <person name="Thomson N.R."/>
            <person name="Harris D.E."/>
            <person name="Holden M.T.G."/>
            <person name="Churcher C.M."/>
            <person name="Bentley S.D."/>
            <person name="Mungall K.L."/>
            <person name="Cerdeno-Tarraga A.-M."/>
            <person name="Temple L."/>
            <person name="James K.D."/>
            <person name="Harris B."/>
            <person name="Quail M.A."/>
            <person name="Achtman M."/>
            <person name="Atkin R."/>
            <person name="Baker S."/>
            <person name="Basham D."/>
            <person name="Bason N."/>
            <person name="Cherevach I."/>
            <person name="Chillingworth T."/>
            <person name="Collins M."/>
            <person name="Cronin A."/>
            <person name="Davis P."/>
            <person name="Doggett J."/>
            <person name="Feltwell T."/>
            <person name="Goble A."/>
            <person name="Hamlin N."/>
            <person name="Hauser H."/>
            <person name="Holroyd S."/>
            <person name="Jagels K."/>
            <person name="Leather S."/>
            <person name="Moule S."/>
            <person name="Norberczak H."/>
            <person name="O'Neil S."/>
            <person name="Ormond D."/>
            <person name="Price C."/>
            <person name="Rabbinowitsch E."/>
            <person name="Rutter S."/>
            <person name="Sanders M."/>
            <person name="Saunders D."/>
            <person name="Seeger K."/>
            <person name="Sharp S."/>
            <person name="Simmonds M."/>
            <person name="Skelton J."/>
            <person name="Squares R."/>
            <person name="Squares S."/>
            <person name="Stevens K."/>
            <person name="Unwin L."/>
            <person name="Whitehead S."/>
            <person name="Barrell B.G."/>
            <person name="Maskell D.J."/>
        </authorList>
    </citation>
    <scope>NUCLEOTIDE SEQUENCE [LARGE SCALE GENOMIC DNA]</scope>
    <source>
        <strain>ATCC BAA-588 / NCTC 13252 / RB50</strain>
    </source>
</reference>
<keyword id="KW-0963">Cytoplasm</keyword>
<keyword id="KW-0255">Endonuclease</keyword>
<keyword id="KW-0378">Hydrolase</keyword>
<keyword id="KW-0460">Magnesium</keyword>
<keyword id="KW-0479">Metal-binding</keyword>
<keyword id="KW-0540">Nuclease</keyword>
<proteinExistence type="inferred from homology"/>
<evidence type="ECO:0000255" key="1">
    <source>
        <dbReference type="HAMAP-Rule" id="MF_00042"/>
    </source>
</evidence>
<evidence type="ECO:0000255" key="2">
    <source>
        <dbReference type="PROSITE-ProRule" id="PRU00408"/>
    </source>
</evidence>
<gene>
    <name evidence="1" type="primary">rnhA</name>
    <name type="ordered locus">BB4278</name>
</gene>
<sequence>MQNLEGSGDGQQVEMWTDGACKGNPGPGGWGVLMRAGQHEKTMHGGERQTTNNRMELMAVIEGLRALKRPCRVTIHTDSQYVMKGMTEWLANWKRRGWRTADKKPVKNVELWQALDEQVGRHQVQWRWVRGHAGDPGNERADALANQGVEAARGR</sequence>
<protein>
    <recommendedName>
        <fullName evidence="1">Ribonuclease H</fullName>
        <shortName evidence="1">RNase H</shortName>
        <ecNumber evidence="1">3.1.26.4</ecNumber>
    </recommendedName>
</protein>
<comment type="function">
    <text evidence="1">Endonuclease that specifically degrades the RNA of RNA-DNA hybrids.</text>
</comment>
<comment type="catalytic activity">
    <reaction evidence="1">
        <text>Endonucleolytic cleavage to 5'-phosphomonoester.</text>
        <dbReference type="EC" id="3.1.26.4"/>
    </reaction>
</comment>
<comment type="cofactor">
    <cofactor evidence="1">
        <name>Mg(2+)</name>
        <dbReference type="ChEBI" id="CHEBI:18420"/>
    </cofactor>
    <text evidence="1">Binds 1 Mg(2+) ion per subunit. May bind a second metal ion at a regulatory site, or after substrate binding.</text>
</comment>
<comment type="subunit">
    <text evidence="1">Monomer.</text>
</comment>
<comment type="subcellular location">
    <subcellularLocation>
        <location evidence="1">Cytoplasm</location>
    </subcellularLocation>
</comment>
<comment type="similarity">
    <text evidence="1">Belongs to the RNase H family.</text>
</comment>
<name>RNH_BORBR</name>
<feature type="chain" id="PRO_0000332565" description="Ribonuclease H">
    <location>
        <begin position="1"/>
        <end position="155"/>
    </location>
</feature>
<feature type="domain" description="RNase H type-1" evidence="2">
    <location>
        <begin position="9"/>
        <end position="150"/>
    </location>
</feature>
<feature type="binding site" evidence="1">
    <location>
        <position position="18"/>
    </location>
    <ligand>
        <name>Mg(2+)</name>
        <dbReference type="ChEBI" id="CHEBI:18420"/>
        <label>1</label>
    </ligand>
</feature>
<feature type="binding site" evidence="1">
    <location>
        <position position="18"/>
    </location>
    <ligand>
        <name>Mg(2+)</name>
        <dbReference type="ChEBI" id="CHEBI:18420"/>
        <label>2</label>
    </ligand>
</feature>
<feature type="binding site" evidence="1">
    <location>
        <position position="56"/>
    </location>
    <ligand>
        <name>Mg(2+)</name>
        <dbReference type="ChEBI" id="CHEBI:18420"/>
        <label>1</label>
    </ligand>
</feature>
<feature type="binding site" evidence="1">
    <location>
        <position position="78"/>
    </location>
    <ligand>
        <name>Mg(2+)</name>
        <dbReference type="ChEBI" id="CHEBI:18420"/>
        <label>1</label>
    </ligand>
</feature>
<feature type="binding site" evidence="1">
    <location>
        <position position="142"/>
    </location>
    <ligand>
        <name>Mg(2+)</name>
        <dbReference type="ChEBI" id="CHEBI:18420"/>
        <label>2</label>
    </ligand>
</feature>
<dbReference type="EC" id="3.1.26.4" evidence="1"/>
<dbReference type="EMBL" id="BX640450">
    <property type="protein sequence ID" value="CAE34642.1"/>
    <property type="molecule type" value="Genomic_DNA"/>
</dbReference>
<dbReference type="RefSeq" id="WP_003814734.1">
    <property type="nucleotide sequence ID" value="NC_002927.3"/>
</dbReference>
<dbReference type="SMR" id="Q7WCJ8"/>
<dbReference type="GeneID" id="93205632"/>
<dbReference type="KEGG" id="bbr:BB4278"/>
<dbReference type="eggNOG" id="COG0328">
    <property type="taxonomic scope" value="Bacteria"/>
</dbReference>
<dbReference type="HOGENOM" id="CLU_030894_6_0_4"/>
<dbReference type="Proteomes" id="UP000001027">
    <property type="component" value="Chromosome"/>
</dbReference>
<dbReference type="GO" id="GO:0005737">
    <property type="term" value="C:cytoplasm"/>
    <property type="evidence" value="ECO:0007669"/>
    <property type="project" value="UniProtKB-SubCell"/>
</dbReference>
<dbReference type="GO" id="GO:0000287">
    <property type="term" value="F:magnesium ion binding"/>
    <property type="evidence" value="ECO:0007669"/>
    <property type="project" value="UniProtKB-UniRule"/>
</dbReference>
<dbReference type="GO" id="GO:0003676">
    <property type="term" value="F:nucleic acid binding"/>
    <property type="evidence" value="ECO:0007669"/>
    <property type="project" value="InterPro"/>
</dbReference>
<dbReference type="GO" id="GO:0004523">
    <property type="term" value="F:RNA-DNA hybrid ribonuclease activity"/>
    <property type="evidence" value="ECO:0007669"/>
    <property type="project" value="UniProtKB-UniRule"/>
</dbReference>
<dbReference type="GO" id="GO:0043137">
    <property type="term" value="P:DNA replication, removal of RNA primer"/>
    <property type="evidence" value="ECO:0007669"/>
    <property type="project" value="TreeGrafter"/>
</dbReference>
<dbReference type="CDD" id="cd09278">
    <property type="entry name" value="RNase_HI_prokaryote_like"/>
    <property type="match status" value="1"/>
</dbReference>
<dbReference type="FunFam" id="3.30.420.10:FF:000089">
    <property type="entry name" value="Ribonuclease H"/>
    <property type="match status" value="1"/>
</dbReference>
<dbReference type="Gene3D" id="3.30.420.10">
    <property type="entry name" value="Ribonuclease H-like superfamily/Ribonuclease H"/>
    <property type="match status" value="1"/>
</dbReference>
<dbReference type="HAMAP" id="MF_00042">
    <property type="entry name" value="RNase_H"/>
    <property type="match status" value="1"/>
</dbReference>
<dbReference type="InterPro" id="IPR050092">
    <property type="entry name" value="RNase_H"/>
</dbReference>
<dbReference type="InterPro" id="IPR012337">
    <property type="entry name" value="RNaseH-like_sf"/>
</dbReference>
<dbReference type="InterPro" id="IPR002156">
    <property type="entry name" value="RNaseH_domain"/>
</dbReference>
<dbReference type="InterPro" id="IPR036397">
    <property type="entry name" value="RNaseH_sf"/>
</dbReference>
<dbReference type="InterPro" id="IPR022892">
    <property type="entry name" value="RNaseHI"/>
</dbReference>
<dbReference type="NCBIfam" id="NF001236">
    <property type="entry name" value="PRK00203.1"/>
    <property type="match status" value="1"/>
</dbReference>
<dbReference type="PANTHER" id="PTHR10642">
    <property type="entry name" value="RIBONUCLEASE H1"/>
    <property type="match status" value="1"/>
</dbReference>
<dbReference type="PANTHER" id="PTHR10642:SF26">
    <property type="entry name" value="RIBONUCLEASE H1"/>
    <property type="match status" value="1"/>
</dbReference>
<dbReference type="Pfam" id="PF00075">
    <property type="entry name" value="RNase_H"/>
    <property type="match status" value="1"/>
</dbReference>
<dbReference type="SUPFAM" id="SSF53098">
    <property type="entry name" value="Ribonuclease H-like"/>
    <property type="match status" value="1"/>
</dbReference>
<dbReference type="PROSITE" id="PS50879">
    <property type="entry name" value="RNASE_H_1"/>
    <property type="match status" value="1"/>
</dbReference>
<organism>
    <name type="scientific">Bordetella bronchiseptica (strain ATCC BAA-588 / NCTC 13252 / RB50)</name>
    <name type="common">Alcaligenes bronchisepticus</name>
    <dbReference type="NCBI Taxonomy" id="257310"/>
    <lineage>
        <taxon>Bacteria</taxon>
        <taxon>Pseudomonadati</taxon>
        <taxon>Pseudomonadota</taxon>
        <taxon>Betaproteobacteria</taxon>
        <taxon>Burkholderiales</taxon>
        <taxon>Alcaligenaceae</taxon>
        <taxon>Bordetella</taxon>
    </lineage>
</organism>
<accession>Q7WCJ8</accession>